<feature type="chain" id="PRO_1000193993" description="Large ribosomal subunit protein uL29">
    <location>
        <begin position="1"/>
        <end position="72"/>
    </location>
</feature>
<keyword id="KW-0687">Ribonucleoprotein</keyword>
<keyword id="KW-0689">Ribosomal protein</keyword>
<reference key="1">
    <citation type="submission" date="2009-01" db="EMBL/GenBank/DDBJ databases">
        <title>Complete sequence of chromosome of Caldicellulosiruptor becscii DSM 6725.</title>
        <authorList>
            <person name="Lucas S."/>
            <person name="Copeland A."/>
            <person name="Lapidus A."/>
            <person name="Glavina del Rio T."/>
            <person name="Tice H."/>
            <person name="Bruce D."/>
            <person name="Goodwin L."/>
            <person name="Pitluck S."/>
            <person name="Sims D."/>
            <person name="Meincke L."/>
            <person name="Brettin T."/>
            <person name="Detter J.C."/>
            <person name="Han C."/>
            <person name="Larimer F."/>
            <person name="Land M."/>
            <person name="Hauser L."/>
            <person name="Kyrpides N."/>
            <person name="Ovchinnikova G."/>
            <person name="Kataeva I."/>
            <person name="Adams M.W.W."/>
        </authorList>
    </citation>
    <scope>NUCLEOTIDE SEQUENCE [LARGE SCALE GENOMIC DNA]</scope>
    <source>
        <strain>ATCC BAA-1888 / DSM 6725 / KCTC 15123 / Z-1320</strain>
    </source>
</reference>
<evidence type="ECO:0000255" key="1">
    <source>
        <dbReference type="HAMAP-Rule" id="MF_00374"/>
    </source>
</evidence>
<evidence type="ECO:0000305" key="2"/>
<protein>
    <recommendedName>
        <fullName evidence="1">Large ribosomal subunit protein uL29</fullName>
    </recommendedName>
    <alternativeName>
        <fullName evidence="2">50S ribosomal protein L29</fullName>
    </alternativeName>
</protein>
<gene>
    <name evidence="1" type="primary">rpmC</name>
    <name type="ordered locus">Athe_1737</name>
</gene>
<organism>
    <name type="scientific">Caldicellulosiruptor bescii (strain ATCC BAA-1888 / DSM 6725 / KCTC 15123 / Z-1320)</name>
    <name type="common">Anaerocellum thermophilum</name>
    <dbReference type="NCBI Taxonomy" id="521460"/>
    <lineage>
        <taxon>Bacteria</taxon>
        <taxon>Bacillati</taxon>
        <taxon>Bacillota</taxon>
        <taxon>Bacillota incertae sedis</taxon>
        <taxon>Caldicellulosiruptorales</taxon>
        <taxon>Caldicellulosiruptoraceae</taxon>
        <taxon>Caldicellulosiruptor</taxon>
    </lineage>
</organism>
<dbReference type="EMBL" id="CP001393">
    <property type="protein sequence ID" value="ACM60831.1"/>
    <property type="molecule type" value="Genomic_DNA"/>
</dbReference>
<dbReference type="RefSeq" id="WP_013429973.1">
    <property type="nucleotide sequence ID" value="NC_012034.1"/>
</dbReference>
<dbReference type="SMR" id="B9MKH3"/>
<dbReference type="STRING" id="521460.Athe_1737"/>
<dbReference type="GeneID" id="31773094"/>
<dbReference type="KEGG" id="ate:Athe_1737"/>
<dbReference type="eggNOG" id="COG0255">
    <property type="taxonomic scope" value="Bacteria"/>
</dbReference>
<dbReference type="HOGENOM" id="CLU_158491_5_2_9"/>
<dbReference type="Proteomes" id="UP000007723">
    <property type="component" value="Chromosome"/>
</dbReference>
<dbReference type="GO" id="GO:0022625">
    <property type="term" value="C:cytosolic large ribosomal subunit"/>
    <property type="evidence" value="ECO:0007669"/>
    <property type="project" value="TreeGrafter"/>
</dbReference>
<dbReference type="GO" id="GO:0003735">
    <property type="term" value="F:structural constituent of ribosome"/>
    <property type="evidence" value="ECO:0007669"/>
    <property type="project" value="InterPro"/>
</dbReference>
<dbReference type="GO" id="GO:0006412">
    <property type="term" value="P:translation"/>
    <property type="evidence" value="ECO:0007669"/>
    <property type="project" value="UniProtKB-UniRule"/>
</dbReference>
<dbReference type="CDD" id="cd00427">
    <property type="entry name" value="Ribosomal_L29_HIP"/>
    <property type="match status" value="1"/>
</dbReference>
<dbReference type="FunFam" id="1.10.287.310:FF:000001">
    <property type="entry name" value="50S ribosomal protein L29"/>
    <property type="match status" value="1"/>
</dbReference>
<dbReference type="Gene3D" id="1.10.287.310">
    <property type="match status" value="1"/>
</dbReference>
<dbReference type="HAMAP" id="MF_00374">
    <property type="entry name" value="Ribosomal_uL29"/>
    <property type="match status" value="1"/>
</dbReference>
<dbReference type="InterPro" id="IPR050063">
    <property type="entry name" value="Ribosomal_protein_uL29"/>
</dbReference>
<dbReference type="InterPro" id="IPR001854">
    <property type="entry name" value="Ribosomal_uL29"/>
</dbReference>
<dbReference type="InterPro" id="IPR018254">
    <property type="entry name" value="Ribosomal_uL29_CS"/>
</dbReference>
<dbReference type="InterPro" id="IPR036049">
    <property type="entry name" value="Ribosomal_uL29_sf"/>
</dbReference>
<dbReference type="NCBIfam" id="TIGR00012">
    <property type="entry name" value="L29"/>
    <property type="match status" value="1"/>
</dbReference>
<dbReference type="PANTHER" id="PTHR10916">
    <property type="entry name" value="60S RIBOSOMAL PROTEIN L35/50S RIBOSOMAL PROTEIN L29"/>
    <property type="match status" value="1"/>
</dbReference>
<dbReference type="PANTHER" id="PTHR10916:SF0">
    <property type="entry name" value="LARGE RIBOSOMAL SUBUNIT PROTEIN UL29C"/>
    <property type="match status" value="1"/>
</dbReference>
<dbReference type="Pfam" id="PF00831">
    <property type="entry name" value="Ribosomal_L29"/>
    <property type="match status" value="1"/>
</dbReference>
<dbReference type="SUPFAM" id="SSF46561">
    <property type="entry name" value="Ribosomal protein L29 (L29p)"/>
    <property type="match status" value="1"/>
</dbReference>
<dbReference type="PROSITE" id="PS00579">
    <property type="entry name" value="RIBOSOMAL_L29"/>
    <property type="match status" value="1"/>
</dbReference>
<proteinExistence type="inferred from homology"/>
<name>RL29_CALBD</name>
<accession>B9MKH3</accession>
<comment type="similarity">
    <text evidence="1">Belongs to the universal ribosomal protein uL29 family.</text>
</comment>
<sequence>MKASKIREMTTQELHNELKKLKRELFNLRFQLATNQLENPMRIREVKRTIARIKTIMRERELEQERANKNVK</sequence>